<proteinExistence type="inferred from homology"/>
<keyword id="KW-0249">Electron transport</keyword>
<keyword id="KW-0274">FAD</keyword>
<keyword id="KW-0285">Flavoprotein</keyword>
<keyword id="KW-1185">Reference proteome</keyword>
<keyword id="KW-0813">Transport</keyword>
<gene>
    <name type="primary">etfB</name>
    <name type="ordered locus">PA2952</name>
</gene>
<name>ETFB_PSEAE</name>
<dbReference type="EMBL" id="AE004091">
    <property type="protein sequence ID" value="AAG06340.1"/>
    <property type="molecule type" value="Genomic_DNA"/>
</dbReference>
<dbReference type="PIR" id="C83277">
    <property type="entry name" value="C83277"/>
</dbReference>
<dbReference type="RefSeq" id="NP_251642.1">
    <property type="nucleotide sequence ID" value="NC_002516.2"/>
</dbReference>
<dbReference type="RefSeq" id="WP_003091107.1">
    <property type="nucleotide sequence ID" value="NZ_QZGE01000009.1"/>
</dbReference>
<dbReference type="SMR" id="Q9HZP6"/>
<dbReference type="FunCoup" id="Q9HZP6">
    <property type="interactions" value="610"/>
</dbReference>
<dbReference type="STRING" id="208964.PA2952"/>
<dbReference type="PaxDb" id="208964-PA2952"/>
<dbReference type="GeneID" id="880158"/>
<dbReference type="KEGG" id="pae:PA2952"/>
<dbReference type="PATRIC" id="fig|208964.12.peg.3098"/>
<dbReference type="PseudoCAP" id="PA2952"/>
<dbReference type="HOGENOM" id="CLU_060196_0_0_6"/>
<dbReference type="InParanoid" id="Q9HZP6"/>
<dbReference type="OrthoDB" id="9781325at2"/>
<dbReference type="PhylomeDB" id="Q9HZP6"/>
<dbReference type="BioCyc" id="PAER208964:G1FZ6-3003-MONOMER"/>
<dbReference type="Proteomes" id="UP000002438">
    <property type="component" value="Chromosome"/>
</dbReference>
<dbReference type="GO" id="GO:0009055">
    <property type="term" value="F:electron transfer activity"/>
    <property type="evidence" value="ECO:0000318"/>
    <property type="project" value="GO_Central"/>
</dbReference>
<dbReference type="CDD" id="cd01714">
    <property type="entry name" value="ETF_beta"/>
    <property type="match status" value="1"/>
</dbReference>
<dbReference type="FunFam" id="3.40.50.620:FF:000011">
    <property type="entry name" value="Electron transfer flavoprotein subunit beta"/>
    <property type="match status" value="1"/>
</dbReference>
<dbReference type="Gene3D" id="3.40.50.620">
    <property type="entry name" value="HUPs"/>
    <property type="match status" value="1"/>
</dbReference>
<dbReference type="InterPro" id="IPR000049">
    <property type="entry name" value="ET-Flavoprotein_bsu_CS"/>
</dbReference>
<dbReference type="InterPro" id="IPR014730">
    <property type="entry name" value="ETF_a/b_N"/>
</dbReference>
<dbReference type="InterPro" id="IPR012255">
    <property type="entry name" value="ETF_b"/>
</dbReference>
<dbReference type="InterPro" id="IPR033948">
    <property type="entry name" value="ETF_beta_N"/>
</dbReference>
<dbReference type="InterPro" id="IPR014729">
    <property type="entry name" value="Rossmann-like_a/b/a_fold"/>
</dbReference>
<dbReference type="PANTHER" id="PTHR21294">
    <property type="entry name" value="ELECTRON TRANSFER FLAVOPROTEIN BETA-SUBUNIT"/>
    <property type="match status" value="1"/>
</dbReference>
<dbReference type="PANTHER" id="PTHR21294:SF8">
    <property type="entry name" value="ELECTRON TRANSFER FLAVOPROTEIN SUBUNIT BETA"/>
    <property type="match status" value="1"/>
</dbReference>
<dbReference type="Pfam" id="PF01012">
    <property type="entry name" value="ETF"/>
    <property type="match status" value="1"/>
</dbReference>
<dbReference type="PIRSF" id="PIRSF000090">
    <property type="entry name" value="Beta-ETF"/>
    <property type="match status" value="1"/>
</dbReference>
<dbReference type="SMART" id="SM00893">
    <property type="entry name" value="ETF"/>
    <property type="match status" value="1"/>
</dbReference>
<dbReference type="SUPFAM" id="SSF52402">
    <property type="entry name" value="Adenine nucleotide alpha hydrolases-like"/>
    <property type="match status" value="1"/>
</dbReference>
<dbReference type="PROSITE" id="PS01065">
    <property type="entry name" value="ETF_BETA"/>
    <property type="match status" value="1"/>
</dbReference>
<feature type="chain" id="PRO_0000287792" description="Electron transfer flavoprotein subunit beta">
    <location>
        <begin position="1"/>
        <end position="249"/>
    </location>
</feature>
<protein>
    <recommendedName>
        <fullName>Electron transfer flavoprotein subunit beta</fullName>
        <shortName>Beta-ETF</shortName>
    </recommendedName>
    <alternativeName>
        <fullName>Electron transfer flavoprotein small subunit</fullName>
        <shortName>ETFSS</shortName>
    </alternativeName>
</protein>
<evidence type="ECO:0000250" key="1"/>
<evidence type="ECO:0000305" key="2"/>
<sequence length="249" mass="26377">MKVLVAVKRVVDYNVKVRVKADNSGVDLANVKMSMNPFCEIAVEEAVRLKEKGVATEIVAVSVGPTAAQEQLRTALALGADRAILVESNDELNSLAVAKLLKAVVDKEQPQLVILGKQAIDSDNNQTGQMLAALTGYAQGTFASKVEVAGDKVNVTREIDGGLQTVALNLPAIVTTDLRLNEPRYASLPNIMKAKKKPLDVVTPDALGVSTASTVKTLKVEAPAARSAGIKVKSVAELVEKLKNEAKVI</sequence>
<organism>
    <name type="scientific">Pseudomonas aeruginosa (strain ATCC 15692 / DSM 22644 / CIP 104116 / JCM 14847 / LMG 12228 / 1C / PRS 101 / PAO1)</name>
    <dbReference type="NCBI Taxonomy" id="208964"/>
    <lineage>
        <taxon>Bacteria</taxon>
        <taxon>Pseudomonadati</taxon>
        <taxon>Pseudomonadota</taxon>
        <taxon>Gammaproteobacteria</taxon>
        <taxon>Pseudomonadales</taxon>
        <taxon>Pseudomonadaceae</taxon>
        <taxon>Pseudomonas</taxon>
    </lineage>
</organism>
<comment type="function">
    <text evidence="1">The electron transfer flavoprotein serves as a specific electron acceptor for other dehydrogenases. It transfers the electrons to the main respiratory chain via ETF-ubiquinone oxidoreductase (ETF dehydrogenase) (By similarity).</text>
</comment>
<comment type="cofactor">
    <cofactor evidence="1">
        <name>FAD</name>
        <dbReference type="ChEBI" id="CHEBI:57692"/>
    </cofactor>
    <text evidence="1">Binds 1 FAD per dimer.</text>
</comment>
<comment type="cofactor">
    <cofactor evidence="1">
        <name>AMP</name>
        <dbReference type="ChEBI" id="CHEBI:456215"/>
    </cofactor>
    <text evidence="1">Binds 1 AMP per subunit.</text>
</comment>
<comment type="subunit">
    <text evidence="1">Heterodimer of an alpha and a beta subunit.</text>
</comment>
<comment type="similarity">
    <text evidence="2">Belongs to the ETF beta-subunit/FixA family.</text>
</comment>
<accession>Q9HZP6</accession>
<reference key="1">
    <citation type="journal article" date="2000" name="Nature">
        <title>Complete genome sequence of Pseudomonas aeruginosa PAO1, an opportunistic pathogen.</title>
        <authorList>
            <person name="Stover C.K."/>
            <person name="Pham X.-Q.T."/>
            <person name="Erwin A.L."/>
            <person name="Mizoguchi S.D."/>
            <person name="Warrener P."/>
            <person name="Hickey M.J."/>
            <person name="Brinkman F.S.L."/>
            <person name="Hufnagle W.O."/>
            <person name="Kowalik D.J."/>
            <person name="Lagrou M."/>
            <person name="Garber R.L."/>
            <person name="Goltry L."/>
            <person name="Tolentino E."/>
            <person name="Westbrock-Wadman S."/>
            <person name="Yuan Y."/>
            <person name="Brody L.L."/>
            <person name="Coulter S.N."/>
            <person name="Folger K.R."/>
            <person name="Kas A."/>
            <person name="Larbig K."/>
            <person name="Lim R.M."/>
            <person name="Smith K.A."/>
            <person name="Spencer D.H."/>
            <person name="Wong G.K.-S."/>
            <person name="Wu Z."/>
            <person name="Paulsen I.T."/>
            <person name="Reizer J."/>
            <person name="Saier M.H. Jr."/>
            <person name="Hancock R.E.W."/>
            <person name="Lory S."/>
            <person name="Olson M.V."/>
        </authorList>
    </citation>
    <scope>NUCLEOTIDE SEQUENCE [LARGE SCALE GENOMIC DNA]</scope>
    <source>
        <strain>ATCC 15692 / DSM 22644 / CIP 104116 / JCM 14847 / LMG 12228 / 1C / PRS 101 / PAO1</strain>
    </source>
</reference>